<organism>
    <name type="scientific">Measles virus (strain Edmonston)</name>
    <name type="common">MeV</name>
    <name type="synonym">Subacute sclerose panencephalitis virus</name>
    <dbReference type="NCBI Taxonomy" id="11235"/>
    <lineage>
        <taxon>Viruses</taxon>
        <taxon>Riboviria</taxon>
        <taxon>Orthornavirae</taxon>
        <taxon>Negarnaviricota</taxon>
        <taxon>Haploviricotina</taxon>
        <taxon>Monjiviricetes</taxon>
        <taxon>Mononegavirales</taxon>
        <taxon>Paramyxoviridae</taxon>
        <taxon>Orthoparamyxovirinae</taxon>
        <taxon>Morbillivirus</taxon>
        <taxon>Morbillivirus hominis</taxon>
        <taxon>Measles morbillivirus</taxon>
    </lineage>
</organism>
<proteinExistence type="evidence at protein level"/>
<sequence>MAEEQARHVKNGLECIRALKAEPIGSLAIEEAMAAWSEISDNPGQERATCREEKAGSSGLSKPCLSAIGSTEGGAPRIRGQGPGESDDDAETLGIPPRNLQASSTGLQCYYVYDHSGEAVKGIQDADSIMVQSGLDGDSTLSGGDNESENSDVDIGEPDTEGYAITDRGSAPISMGFRASDVETAEGGEIHELLRLQSRGNNFPKLGKTLNVPPPPDPGRASTSGTPIKKGTERRLASFGTEIASLLTGGATQCARKSPSEPSGPGAPAGNVPECVSNAALIQEWTPESGTTISPRSQNNEEGGDYYDDELFSDVQDIKTALAKIHEDNQKIISKLESLLLLKGEVESIKKQINRQNISISTLEGHLSSIMIAIPGLGKDPNDPTADVEINPDLKPIIGRDSGRALAEVLKKPVASRQLQGMTNGRTSSRGQLLKEFQLKPIGKKMSSAVGFVPDTGPASRSVIRSIIKSSRLEEDRKRYLMTLLDDIKGANDLAKFHQMLMKIIMK</sequence>
<dbReference type="EMBL" id="M10456">
    <property type="protein sequence ID" value="AAA46437.1"/>
    <property type="molecule type" value="Genomic_RNA"/>
</dbReference>
<dbReference type="EMBL" id="K02912">
    <property type="protein sequence ID" value="AAA46436.1"/>
    <property type="molecule type" value="Genomic_RNA"/>
</dbReference>
<dbReference type="PIR" id="A04038">
    <property type="entry name" value="RRNZM"/>
</dbReference>
<dbReference type="PDB" id="1OKS">
    <property type="method" value="X-ray"/>
    <property type="resolution" value="1.80 A"/>
    <property type="chains" value="A=459-507"/>
</dbReference>
<dbReference type="PDB" id="2K9D">
    <property type="method" value="NMR"/>
    <property type="chains" value="A=462-505"/>
</dbReference>
<dbReference type="PDBsum" id="1OKS"/>
<dbReference type="PDBsum" id="2K9D"/>
<dbReference type="BMRB" id="P03422"/>
<dbReference type="SMR" id="P03422"/>
<dbReference type="IntAct" id="P03422">
    <property type="interactions" value="1"/>
</dbReference>
<dbReference type="MINT" id="P03422"/>
<dbReference type="DrugBank" id="DB03309">
    <property type="generic name" value="N-cyclohexyltaurine"/>
</dbReference>
<dbReference type="EvolutionaryTrace" id="P03422"/>
<dbReference type="GO" id="GO:0140693">
    <property type="term" value="F:molecular condensate scaffold activity"/>
    <property type="evidence" value="ECO:0000314"/>
    <property type="project" value="DisProt"/>
</dbReference>
<dbReference type="GO" id="GO:0044183">
    <property type="term" value="F:protein folding chaperone"/>
    <property type="evidence" value="ECO:0000269"/>
    <property type="project" value="DisProt"/>
</dbReference>
<dbReference type="GO" id="GO:0003723">
    <property type="term" value="F:RNA binding"/>
    <property type="evidence" value="ECO:0007669"/>
    <property type="project" value="InterPro"/>
</dbReference>
<dbReference type="GO" id="GO:0003968">
    <property type="term" value="F:RNA-directed RNA polymerase activity"/>
    <property type="evidence" value="ECO:0007669"/>
    <property type="project" value="InterPro"/>
</dbReference>
<dbReference type="GO" id="GO:0006351">
    <property type="term" value="P:DNA-templated transcription"/>
    <property type="evidence" value="ECO:0007669"/>
    <property type="project" value="InterPro"/>
</dbReference>
<dbReference type="GO" id="GO:0019079">
    <property type="term" value="P:viral genome replication"/>
    <property type="evidence" value="ECO:0007669"/>
    <property type="project" value="InterPro"/>
</dbReference>
<dbReference type="CDD" id="cd21031">
    <property type="entry name" value="MEV_P-protein-C_like"/>
    <property type="match status" value="1"/>
</dbReference>
<dbReference type="DisProt" id="DP00133"/>
<dbReference type="Gene3D" id="1.20.5.110">
    <property type="match status" value="1"/>
</dbReference>
<dbReference type="Gene3D" id="1.10.8.10">
    <property type="entry name" value="DNA helicase RuvA subunit, C-terminal domain"/>
    <property type="match status" value="1"/>
</dbReference>
<dbReference type="InterPro" id="IPR004897">
    <property type="entry name" value="P/V_Pprotein_paramyxoviral"/>
</dbReference>
<dbReference type="InterPro" id="IPR028243">
    <property type="entry name" value="Paramyxo_P/V_N"/>
</dbReference>
<dbReference type="InterPro" id="IPR016075">
    <property type="entry name" value="RNA_pol_Pprot-P_XD_paramyxovir"/>
</dbReference>
<dbReference type="Pfam" id="PF03210">
    <property type="entry name" value="Paramyx_P_V_C"/>
    <property type="match status" value="1"/>
</dbReference>
<dbReference type="Pfam" id="PF13825">
    <property type="entry name" value="Paramyxo_P_V_N"/>
    <property type="match status" value="1"/>
</dbReference>
<dbReference type="SUPFAM" id="SSF101089">
    <property type="entry name" value="Phosphoprotein XD domain"/>
    <property type="match status" value="1"/>
</dbReference>
<name>PHOSP_MEASE</name>
<reference key="1">
    <citation type="journal article" date="1985" name="J. Virol.">
        <title>Measles virus P gene codes for two proteins.</title>
        <authorList>
            <person name="Bellini W.J."/>
            <person name="Englund G."/>
            <person name="Rozenblatt S."/>
            <person name="Arnheiter H."/>
            <person name="Richardson C.D."/>
        </authorList>
    </citation>
    <scope>NUCLEOTIDE SEQUENCE [GENOMIC RNA]</scope>
</reference>
<reference key="2">
    <citation type="journal article" date="1984" name="J. Virol.">
        <title>Positive identification of a measles virus cDNA clone encoding a region of the phosphoprotein.</title>
        <authorList>
            <person name="Bellini W.J."/>
            <person name="Englund G."/>
            <person name="Richardson C.D."/>
            <person name="Rozenblatt S."/>
        </authorList>
    </citation>
    <scope>NUCLEOTIDE SEQUENCE [GENOMIC RNA] OF 401-507</scope>
</reference>
<reference key="3">
    <citation type="journal article" date="2016" name="PLoS Pathog.">
        <title>Modulation of Re-initiation of Measles Virus Transcription at Intergenic Regions by PXD to NTAIL Binding Strength.</title>
        <authorList>
            <person name="Bloyet L.M."/>
            <person name="Brunel J."/>
            <person name="Dosnon M."/>
            <person name="Hamon V."/>
            <person name="Erales J."/>
            <person name="Gruet A."/>
            <person name="Lazert C."/>
            <person name="Bignon C."/>
            <person name="Roche P."/>
            <person name="Longhi S."/>
            <person name="Gerlier D."/>
        </authorList>
    </citation>
    <scope>INTERACTION WITH THE NUCLEOCAPSID PROTEIN</scope>
</reference>
<reference evidence="10" key="4">
    <citation type="journal article" date="2003" name="J. Biol. Chem.">
        <title>Crystal structure of the measles virus phosphoprotein domain responsible for the induced folding of the C-terminal domain of the nucleoprotein.</title>
        <authorList>
            <person name="Johansson K."/>
            <person name="Bourhis J.M."/>
            <person name="Campanacci V."/>
            <person name="Cambillau C."/>
            <person name="Canard B."/>
            <person name="Longhi S."/>
        </authorList>
    </citation>
    <scope>X-RAY CRYSTALLOGRAPHY (1.80 ANGSTROMS) OF 459-507</scope>
</reference>
<reference evidence="11" key="5">
    <citation type="journal article" date="2009" name="FEBS Lett.">
        <title>Interaction between the C-terminal domains of N and P proteins of measles virus investigated by NMR.</title>
        <authorList>
            <person name="Bernard C."/>
            <person name="Gely S."/>
            <person name="Bourhis J.M."/>
            <person name="Morelli X."/>
            <person name="Longhi S."/>
            <person name="Darbon H."/>
        </authorList>
    </citation>
    <scope>STRUCTURE BY NMR OF 462-505</scope>
</reference>
<feature type="chain" id="PRO_0000142690" description="Phosphoprotein">
    <location>
        <begin position="1"/>
        <end position="507"/>
    </location>
</feature>
<feature type="region of interest" description="Interaction with N0" evidence="4">
    <location>
        <begin position="1"/>
        <end position="48"/>
    </location>
</feature>
<feature type="region of interest" description="Disordered" evidence="7">
    <location>
        <begin position="41"/>
        <end position="99"/>
    </location>
</feature>
<feature type="region of interest" description="Disordered" evidence="7">
    <location>
        <begin position="134"/>
        <end position="163"/>
    </location>
</feature>
<feature type="region of interest" description="Disordered" evidence="7">
    <location>
        <begin position="201"/>
        <end position="231"/>
    </location>
</feature>
<feature type="region of interest" description="Disordered" evidence="7">
    <location>
        <begin position="250"/>
        <end position="273"/>
    </location>
</feature>
<feature type="region of interest" description="Multimerization" evidence="4">
    <location>
        <begin position="304"/>
        <end position="376"/>
    </location>
</feature>
<feature type="region of interest" description="Interaction with the L polymerase" evidence="6">
    <location>
        <begin position="361"/>
        <end position="377"/>
    </location>
</feature>
<feature type="region of interest" description="Interaction with the L polymerase" evidence="6">
    <location>
        <begin position="396"/>
        <end position="410"/>
    </location>
</feature>
<feature type="region of interest" description="X domain (XD)" evidence="6">
    <location>
        <begin position="457"/>
        <end position="507"/>
    </location>
</feature>
<feature type="region of interest" description="Interaction with the nucleocapsid (N-RNA)" evidence="4">
    <location>
        <begin position="459"/>
        <end position="507"/>
    </location>
</feature>
<feature type="compositionally biased region" description="Low complexity" evidence="7">
    <location>
        <begin position="134"/>
        <end position="145"/>
    </location>
</feature>
<feature type="compositionally biased region" description="Acidic residues" evidence="7">
    <location>
        <begin position="146"/>
        <end position="160"/>
    </location>
</feature>
<feature type="compositionally biased region" description="Low complexity" evidence="7">
    <location>
        <begin position="260"/>
        <end position="270"/>
    </location>
</feature>
<feature type="modified residue" description="Phosphoserine" evidence="4">
    <location>
        <position position="86"/>
    </location>
</feature>
<feature type="modified residue" description="Phosphoserine" evidence="4">
    <location>
        <position position="151"/>
    </location>
</feature>
<feature type="sequence conflict" description="In Ref. 2; AAA46436." evidence="9" ref="2">
    <original>KE</original>
    <variation>RQ</variation>
    <location>
        <begin position="435"/>
        <end position="436"/>
    </location>
</feature>
<feature type="sequence conflict" description="In Ref. 2; AAA46436." evidence="9" ref="2">
    <original>I</original>
    <variation>T</variation>
    <location>
        <position position="464"/>
    </location>
</feature>
<feature type="helix" evidence="12">
    <location>
        <begin position="461"/>
        <end position="470"/>
    </location>
</feature>
<feature type="helix" evidence="12">
    <location>
        <begin position="475"/>
        <end position="487"/>
    </location>
</feature>
<feature type="helix" evidence="12">
    <location>
        <begin position="491"/>
        <end position="507"/>
    </location>
</feature>
<comment type="function">
    <text evidence="3 4">Essential cofactor of the RNA polymerase L that plays a central role in the transcription and replication by forming the polymerase complex with RNA polymerase L and recruiting L to the genomic N-RNA template for RNA synthesis (By similarity). Also plays a central role in the encapsidation of nascent RNA chains by forming the encapsidation complex with the nucleocapsid protein N (N-P complex). Acts as a chaperone for newly synthesized free N protein, so-called N0, allowing encapsidation of nascent RNA chains during replication (By similarity). The nucleoprotein protein N prevents excessive phosphorylation of P, which leads to down-regulation of viral transcription/ replication. Participates, together with N, in the formation of viral factories (viroplasms), which are large inclusions in the host cytoplasm where replication takes place (By similarity).</text>
</comment>
<comment type="subunit">
    <text evidence="4 5 6 8">Homotetramer (By similarity). Interacts (via multimerization domain and XD domain) with polymerase L; this interaction forms the polymerase L-P complex (By similarity). Interacts (via N-terminus) with N0 (via Ncore); this interaction allows P to chaperon N0 to avoid N polymerization and non-specific RNA binding before encapsidation (By similarity). Interacts (via C-terminus) with N-RNA template (via Ntail); this interaction maintains the P/L complex anchored to the nucleocapsid template during the sequential transcription (PubMed:27936158). Interacts (via C-terminus) with protein C this interaction allows C to associate with the ribonucleocapsid (By similarity).</text>
</comment>
<comment type="interaction">
    <interactant intactId="EBI-8589851">
        <id>P03422</id>
    </interactant>
    <interactant intactId="EBI-8589867">
        <id>Q89933</id>
        <label>N</label>
    </interactant>
    <organismsDiffer>true</organismsDiffer>
    <experiments>3</experiments>
</comment>
<comment type="domain">
    <text evidence="2 3 4 5">The N-terminus consists of a long intrinsically disordered tail. The central part contains the coiled-coil multimerization domain (MD) (By similarity). Forms a four-stranded coiled coil structure (By similarity). The C-terminus constitutes the alpha-helical domain (XD) that binds to the nucleocapsid (N-RNA complex) (By similarity).</text>
</comment>
<comment type="PTM">
    <text evidence="4">Phosphorylation on serines by host CK2 is necessary for the formation of viral factories.</text>
</comment>
<comment type="RNA editing">
    <location>
        <position position="231" evidence="1"/>
    </location>
    <text evidence="1">Partially edited. RNA editing at this position consists of an insertion of one guanine nucleotide. The sequence displayed here is the P protein, derived from the unedited RNA. The edited RNA gives rise to the V protein (AC Q9EMA9) (By similarity).</text>
</comment>
<comment type="similarity">
    <text evidence="9">Belongs to the morbillivirus P protein family.</text>
</comment>
<evidence type="ECO:0000250" key="1"/>
<evidence type="ECO:0000250" key="2">
    <source>
        <dbReference type="UniProtKB" id="P04859"/>
    </source>
</evidence>
<evidence type="ECO:0000250" key="3">
    <source>
        <dbReference type="UniProtKB" id="P06162"/>
    </source>
</evidence>
<evidence type="ECO:0000250" key="4">
    <source>
        <dbReference type="UniProtKB" id="Q77M42"/>
    </source>
</evidence>
<evidence type="ECO:0000250" key="5">
    <source>
        <dbReference type="UniProtKB" id="Q83623"/>
    </source>
</evidence>
<evidence type="ECO:0000250" key="6">
    <source>
        <dbReference type="UniProtKB" id="Q9WMB4"/>
    </source>
</evidence>
<evidence type="ECO:0000256" key="7">
    <source>
        <dbReference type="SAM" id="MobiDB-lite"/>
    </source>
</evidence>
<evidence type="ECO:0000269" key="8">
    <source>
    </source>
</evidence>
<evidence type="ECO:0000305" key="9"/>
<evidence type="ECO:0007744" key="10">
    <source>
        <dbReference type="PDB" id="1OKS"/>
    </source>
</evidence>
<evidence type="ECO:0007744" key="11">
    <source>
        <dbReference type="PDB" id="2K9D"/>
    </source>
</evidence>
<evidence type="ECO:0007829" key="12">
    <source>
        <dbReference type="PDB" id="1OKS"/>
    </source>
</evidence>
<accession>P03422</accession>
<gene>
    <name type="primary">P/V</name>
</gene>
<protein>
    <recommendedName>
        <fullName>Phosphoprotein</fullName>
        <shortName>Protein P</shortName>
    </recommendedName>
</protein>
<keyword id="KW-0002">3D-structure</keyword>
<keyword id="KW-0597">Phosphoprotein</keyword>
<keyword id="KW-0691">RNA editing</keyword>
<keyword id="KW-0693">Viral RNA replication</keyword>
<organismHost>
    <name type="scientific">Homo sapiens</name>
    <name type="common">Human</name>
    <dbReference type="NCBI Taxonomy" id="9606"/>
</organismHost>